<reference key="1">
    <citation type="journal article" date="2005" name="J. Gen. Virol.">
        <title>Complete coding sequences of the rabbitpox virus genome.</title>
        <authorList>
            <person name="Li G."/>
            <person name="Chen N."/>
            <person name="Roper R.L."/>
            <person name="Feng Z."/>
            <person name="Hunter A.L."/>
            <person name="Danila M."/>
            <person name="Lefkowitz E.J."/>
            <person name="Buller R.M.L."/>
            <person name="Upton C."/>
        </authorList>
    </citation>
    <scope>NUCLEOTIDE SEQUENCE [LARGE SCALE GENOMIC DNA]</scope>
</reference>
<keyword id="KW-0426">Late protein</keyword>
<keyword id="KW-0946">Virion</keyword>
<protein>
    <recommendedName>
        <fullName>27 kDa core protein</fullName>
    </recommendedName>
</protein>
<gene>
    <name type="ordered locus">RPXV097</name>
</gene>
<name>D3_RABPU</name>
<organism>
    <name type="scientific">Rabbitpox virus (strain Utrecht)</name>
    <name type="common">RPV</name>
    <dbReference type="NCBI Taxonomy" id="45417"/>
    <lineage>
        <taxon>Viruses</taxon>
        <taxon>Varidnaviria</taxon>
        <taxon>Bamfordvirae</taxon>
        <taxon>Nucleocytoviricota</taxon>
        <taxon>Pokkesviricetes</taxon>
        <taxon>Chitovirales</taxon>
        <taxon>Poxviridae</taxon>
        <taxon>Chordopoxvirinae</taxon>
        <taxon>Orthopoxvirus</taxon>
        <taxon>Vaccinia virus</taxon>
    </lineage>
</organism>
<evidence type="ECO:0000250" key="1"/>
<evidence type="ECO:0000305" key="2"/>
<proteinExistence type="evidence at transcript level"/>
<comment type="function">
    <text evidence="1">Late protein which is part of a large complex required for early virion morphogenesis. This complex participates in the formation of virosomes and the incorporation of virosomal contents into nascent immature virions (By similarity).</text>
</comment>
<comment type="subcellular location">
    <subcellularLocation>
        <location evidence="1">Virion</location>
    </subcellularLocation>
    <text evidence="1">Localizes to the virion core.</text>
</comment>
<comment type="induction">
    <text>Expressed in the late phase of the viral replicative cycle.</text>
</comment>
<comment type="similarity">
    <text evidence="2">Belongs to the chordopoxvirinae D3 family.</text>
</comment>
<organismHost>
    <name type="scientific">Oryctolagus cuniculus</name>
    <name type="common">Rabbit</name>
    <dbReference type="NCBI Taxonomy" id="9986"/>
</organismHost>
<dbReference type="EMBL" id="AY484669">
    <property type="protein sequence ID" value="AAS49810.1"/>
    <property type="molecule type" value="Genomic_DNA"/>
</dbReference>
<dbReference type="Proteomes" id="UP000166173">
    <property type="component" value="Segment"/>
</dbReference>
<dbReference type="GO" id="GO:0044423">
    <property type="term" value="C:virion component"/>
    <property type="evidence" value="ECO:0007669"/>
    <property type="project" value="UniProtKB-KW"/>
</dbReference>
<dbReference type="InterPro" id="IPR007660">
    <property type="entry name" value="Poxvirus_D3"/>
</dbReference>
<dbReference type="Pfam" id="PF04580">
    <property type="entry name" value="Pox_D3"/>
    <property type="match status" value="1"/>
</dbReference>
<feature type="chain" id="PRO_0000099436" description="27 kDa core protein">
    <location>
        <begin position="1"/>
        <end position="237"/>
    </location>
</feature>
<accession>Q6RZJ4</accession>
<sequence length="237" mass="28001">MDIFIVKDNKYPKVDNDDNEVFILLGNHNDFIRSKLTKLKEHVFFSEYIVTPDKYGSLCVELNGSSFQHGGRYIEVEEFIDAGRQVRWCSTSNHISEDIPEDIHTDKFVIYDIYTFDAFKNKRLVFVQVPPSLGDDSYLTNPLLSPYYRNSVARQMVNDMIFNQDSFLKYLLEHLIRSHYRVSKHITIVRYKDTEELNLTRICYNRDKFKAFVFAWFNGVSENEKVLDTYKKVSNLI</sequence>